<organism>
    <name type="scientific">Shewanella amazonensis (strain ATCC BAA-1098 / SB2B)</name>
    <dbReference type="NCBI Taxonomy" id="326297"/>
    <lineage>
        <taxon>Bacteria</taxon>
        <taxon>Pseudomonadati</taxon>
        <taxon>Pseudomonadota</taxon>
        <taxon>Gammaproteobacteria</taxon>
        <taxon>Alteromonadales</taxon>
        <taxon>Shewanellaceae</taxon>
        <taxon>Shewanella</taxon>
    </lineage>
</organism>
<reference key="1">
    <citation type="submission" date="2006-12" db="EMBL/GenBank/DDBJ databases">
        <title>Complete sequence of Shewanella amazonensis SB2B.</title>
        <authorList>
            <consortium name="US DOE Joint Genome Institute"/>
            <person name="Copeland A."/>
            <person name="Lucas S."/>
            <person name="Lapidus A."/>
            <person name="Barry K."/>
            <person name="Detter J.C."/>
            <person name="Glavina del Rio T."/>
            <person name="Hammon N."/>
            <person name="Israni S."/>
            <person name="Dalin E."/>
            <person name="Tice H."/>
            <person name="Pitluck S."/>
            <person name="Munk A.C."/>
            <person name="Brettin T."/>
            <person name="Bruce D."/>
            <person name="Han C."/>
            <person name="Tapia R."/>
            <person name="Gilna P."/>
            <person name="Schmutz J."/>
            <person name="Larimer F."/>
            <person name="Land M."/>
            <person name="Hauser L."/>
            <person name="Kyrpides N."/>
            <person name="Mikhailova N."/>
            <person name="Fredrickson J."/>
            <person name="Richardson P."/>
        </authorList>
    </citation>
    <scope>NUCLEOTIDE SEQUENCE [LARGE SCALE GENOMIC DNA]</scope>
    <source>
        <strain>ATCC BAA-1098 / SB2B</strain>
    </source>
</reference>
<proteinExistence type="inferred from homology"/>
<comment type="function">
    <text evidence="1">Catalyzes the formation of phosphatidylethanolamine (PtdEtn) from phosphatidylserine (PtdSer).</text>
</comment>
<comment type="catalytic activity">
    <reaction evidence="1">
        <text>a 1,2-diacyl-sn-glycero-3-phospho-L-serine + H(+) = a 1,2-diacyl-sn-glycero-3-phosphoethanolamine + CO2</text>
        <dbReference type="Rhea" id="RHEA:20828"/>
        <dbReference type="ChEBI" id="CHEBI:15378"/>
        <dbReference type="ChEBI" id="CHEBI:16526"/>
        <dbReference type="ChEBI" id="CHEBI:57262"/>
        <dbReference type="ChEBI" id="CHEBI:64612"/>
        <dbReference type="EC" id="4.1.1.65"/>
    </reaction>
</comment>
<comment type="cofactor">
    <cofactor evidence="1">
        <name>pyruvate</name>
        <dbReference type="ChEBI" id="CHEBI:15361"/>
    </cofactor>
    <text evidence="1">Binds 1 pyruvoyl group covalently per subunit.</text>
</comment>
<comment type="pathway">
    <text evidence="1">Phospholipid metabolism; phosphatidylethanolamine biosynthesis; phosphatidylethanolamine from CDP-diacylglycerol: step 2/2.</text>
</comment>
<comment type="subunit">
    <text evidence="1">Heterodimer of a large membrane-associated beta subunit and a small pyruvoyl-containing alpha subunit.</text>
</comment>
<comment type="subcellular location">
    <subcellularLocation>
        <location evidence="1">Cell membrane</location>
        <topology evidence="1">Peripheral membrane protein</topology>
    </subcellularLocation>
</comment>
<comment type="PTM">
    <text evidence="1">Is synthesized initially as an inactive proenzyme. Formation of the active enzyme involves a self-maturation process in which the active site pyruvoyl group is generated from an internal serine residue via an autocatalytic post-translational modification. Two non-identical subunits are generated from the proenzyme in this reaction, and the pyruvate is formed at the N-terminus of the alpha chain, which is derived from the carboxyl end of the proenzyme. The autoendoproteolytic cleavage occurs by a canonical serine protease mechanism, in which the side chain hydroxyl group of the serine supplies its oxygen atom to form the C-terminus of the beta chain, while the remainder of the serine residue undergoes an oxidative deamination to produce ammonia and the pyruvoyl prosthetic group on the alpha chain. During this reaction, the Ser that is part of the protease active site of the proenzyme becomes the pyruvoyl prosthetic group, which constitutes an essential element of the active site of the mature decarboxylase.</text>
</comment>
<comment type="similarity">
    <text evidence="1">Belongs to the phosphatidylserine decarboxylase family. PSD-B subfamily. Prokaryotic type I sub-subfamily.</text>
</comment>
<dbReference type="EC" id="4.1.1.65" evidence="1"/>
<dbReference type="EMBL" id="CP000507">
    <property type="protein sequence ID" value="ABM01237.1"/>
    <property type="molecule type" value="Genomic_DNA"/>
</dbReference>
<dbReference type="RefSeq" id="WP_011761141.1">
    <property type="nucleotide sequence ID" value="NC_008700.1"/>
</dbReference>
<dbReference type="SMR" id="A1SA30"/>
<dbReference type="STRING" id="326297.Sama_3034"/>
<dbReference type="KEGG" id="saz:Sama_3034"/>
<dbReference type="eggNOG" id="COG0688">
    <property type="taxonomic scope" value="Bacteria"/>
</dbReference>
<dbReference type="HOGENOM" id="CLU_029061_4_1_6"/>
<dbReference type="OrthoDB" id="9802030at2"/>
<dbReference type="UniPathway" id="UPA00558">
    <property type="reaction ID" value="UER00616"/>
</dbReference>
<dbReference type="Proteomes" id="UP000009175">
    <property type="component" value="Chromosome"/>
</dbReference>
<dbReference type="GO" id="GO:0005886">
    <property type="term" value="C:plasma membrane"/>
    <property type="evidence" value="ECO:0007669"/>
    <property type="project" value="UniProtKB-SubCell"/>
</dbReference>
<dbReference type="GO" id="GO:0004609">
    <property type="term" value="F:phosphatidylserine decarboxylase activity"/>
    <property type="evidence" value="ECO:0007669"/>
    <property type="project" value="UniProtKB-UniRule"/>
</dbReference>
<dbReference type="GO" id="GO:0006646">
    <property type="term" value="P:phosphatidylethanolamine biosynthetic process"/>
    <property type="evidence" value="ECO:0007669"/>
    <property type="project" value="UniProtKB-UniRule"/>
</dbReference>
<dbReference type="HAMAP" id="MF_00662">
    <property type="entry name" value="PS_decarb_PSD_B_type1"/>
    <property type="match status" value="1"/>
</dbReference>
<dbReference type="InterPro" id="IPR003817">
    <property type="entry name" value="PS_Dcarbxylase"/>
</dbReference>
<dbReference type="InterPro" id="IPR033177">
    <property type="entry name" value="PSD-B"/>
</dbReference>
<dbReference type="InterPro" id="IPR033178">
    <property type="entry name" value="PSD_type1_pro"/>
</dbReference>
<dbReference type="NCBIfam" id="TIGR00163">
    <property type="entry name" value="PS_decarb"/>
    <property type="match status" value="1"/>
</dbReference>
<dbReference type="PANTHER" id="PTHR10067">
    <property type="entry name" value="PHOSPHATIDYLSERINE DECARBOXYLASE"/>
    <property type="match status" value="1"/>
</dbReference>
<dbReference type="PANTHER" id="PTHR10067:SF6">
    <property type="entry name" value="PHOSPHATIDYLSERINE DECARBOXYLASE PROENZYME, MITOCHONDRIAL"/>
    <property type="match status" value="1"/>
</dbReference>
<dbReference type="Pfam" id="PF02666">
    <property type="entry name" value="PS_Dcarbxylase"/>
    <property type="match status" value="1"/>
</dbReference>
<protein>
    <recommendedName>
        <fullName evidence="1">Phosphatidylserine decarboxylase proenzyme</fullName>
        <ecNumber evidence="1">4.1.1.65</ecNumber>
    </recommendedName>
    <component>
        <recommendedName>
            <fullName evidence="1">Phosphatidylserine decarboxylase alpha chain</fullName>
        </recommendedName>
    </component>
    <component>
        <recommendedName>
            <fullName evidence="1">Phosphatidylserine decarboxylase beta chain</fullName>
        </recommendedName>
    </component>
</protein>
<sequence length="287" mass="31524">MDKVKIALQYLMPKHLVSRIVGKFAAAEAGFVTTAFIKWFIKQYGINMSEALHSNPEAYKTFNDFFTRELKPGLRPIDQAEDIMVHPVDGAVSQLGPIEDGRIFQAKGHHYSALALLGGQADDAARFEEGDFATIYLAPKDYHRIHMPIKGTLSKMTYVPGELFSVNPLTARNVPGLFARNERVVAIFETDKGPLAMVLVGATIVASIETVWAGTVTPPTGKKVFTWDYPTEGPEALTLEKGAEMGRFKLGSTVVMLFAKDAIDDFADGVKPEAVTRMGQPFAKLED</sequence>
<evidence type="ECO:0000255" key="1">
    <source>
        <dbReference type="HAMAP-Rule" id="MF_00662"/>
    </source>
</evidence>
<accession>A1SA30</accession>
<keyword id="KW-1003">Cell membrane</keyword>
<keyword id="KW-0210">Decarboxylase</keyword>
<keyword id="KW-0444">Lipid biosynthesis</keyword>
<keyword id="KW-0443">Lipid metabolism</keyword>
<keyword id="KW-0456">Lyase</keyword>
<keyword id="KW-0472">Membrane</keyword>
<keyword id="KW-0594">Phospholipid biosynthesis</keyword>
<keyword id="KW-1208">Phospholipid metabolism</keyword>
<keyword id="KW-0670">Pyruvate</keyword>
<keyword id="KW-1185">Reference proteome</keyword>
<keyword id="KW-0865">Zymogen</keyword>
<name>PSD_SHEAM</name>
<feature type="chain" id="PRO_1000026578" description="Phosphatidylserine decarboxylase beta chain" evidence="1">
    <location>
        <begin position="1"/>
        <end position="251"/>
    </location>
</feature>
<feature type="chain" id="PRO_1000026579" description="Phosphatidylserine decarboxylase alpha chain" evidence="1">
    <location>
        <begin position="252"/>
        <end position="287"/>
    </location>
</feature>
<feature type="active site" description="Charge relay system; for autoendoproteolytic cleavage activity" evidence="1">
    <location>
        <position position="89"/>
    </location>
</feature>
<feature type="active site" description="Charge relay system; for autoendoproteolytic cleavage activity" evidence="1">
    <location>
        <position position="146"/>
    </location>
</feature>
<feature type="active site" description="Charge relay system; for autoendoproteolytic cleavage activity" evidence="1">
    <location>
        <position position="252"/>
    </location>
</feature>
<feature type="active site" description="Schiff-base intermediate with substrate; via pyruvic acid; for decarboxylase activity" evidence="1">
    <location>
        <position position="252"/>
    </location>
</feature>
<feature type="site" description="Cleavage (non-hydrolytic); by autocatalysis" evidence="1">
    <location>
        <begin position="251"/>
        <end position="252"/>
    </location>
</feature>
<feature type="modified residue" description="Pyruvic acid (Ser); by autocatalysis" evidence="1">
    <location>
        <position position="252"/>
    </location>
</feature>
<gene>
    <name evidence="1" type="primary">psd</name>
    <name type="ordered locus">Sama_3034</name>
</gene>